<gene>
    <name evidence="1" type="primary">dxr</name>
    <name type="ordered locus">AZOSEA34200</name>
    <name type="ORF">ebA5994</name>
</gene>
<organism>
    <name type="scientific">Aromatoleum aromaticum (strain DSM 19018 / LMG 30748 / EbN1)</name>
    <name type="common">Azoarcus sp. (strain EbN1)</name>
    <dbReference type="NCBI Taxonomy" id="76114"/>
    <lineage>
        <taxon>Bacteria</taxon>
        <taxon>Pseudomonadati</taxon>
        <taxon>Pseudomonadota</taxon>
        <taxon>Betaproteobacteria</taxon>
        <taxon>Rhodocyclales</taxon>
        <taxon>Rhodocyclaceae</taxon>
        <taxon>Aromatoleum</taxon>
    </lineage>
</organism>
<name>DXR_AROAE</name>
<protein>
    <recommendedName>
        <fullName evidence="1">1-deoxy-D-xylulose 5-phosphate reductoisomerase</fullName>
        <shortName evidence="1">DXP reductoisomerase</shortName>
        <ecNumber evidence="1">1.1.1.267</ecNumber>
    </recommendedName>
    <alternativeName>
        <fullName evidence="1">1-deoxyxylulose-5-phosphate reductoisomerase</fullName>
    </alternativeName>
    <alternativeName>
        <fullName evidence="1">2-C-methyl-D-erythritol 4-phosphate synthase</fullName>
    </alternativeName>
</protein>
<dbReference type="EC" id="1.1.1.267" evidence="1"/>
<dbReference type="EMBL" id="CR555306">
    <property type="protein sequence ID" value="CAI09545.1"/>
    <property type="molecule type" value="Genomic_DNA"/>
</dbReference>
<dbReference type="RefSeq" id="WP_011239205.1">
    <property type="nucleotide sequence ID" value="NC_006513.1"/>
</dbReference>
<dbReference type="SMR" id="Q5NZG9"/>
<dbReference type="STRING" id="76114.ebA5994"/>
<dbReference type="KEGG" id="eba:ebA5994"/>
<dbReference type="eggNOG" id="COG0743">
    <property type="taxonomic scope" value="Bacteria"/>
</dbReference>
<dbReference type="HOGENOM" id="CLU_035714_4_0_4"/>
<dbReference type="OrthoDB" id="9806546at2"/>
<dbReference type="UniPathway" id="UPA00056">
    <property type="reaction ID" value="UER00092"/>
</dbReference>
<dbReference type="Proteomes" id="UP000006552">
    <property type="component" value="Chromosome"/>
</dbReference>
<dbReference type="GO" id="GO:0030604">
    <property type="term" value="F:1-deoxy-D-xylulose-5-phosphate reductoisomerase activity"/>
    <property type="evidence" value="ECO:0007669"/>
    <property type="project" value="UniProtKB-UniRule"/>
</dbReference>
<dbReference type="GO" id="GO:0030145">
    <property type="term" value="F:manganese ion binding"/>
    <property type="evidence" value="ECO:0007669"/>
    <property type="project" value="TreeGrafter"/>
</dbReference>
<dbReference type="GO" id="GO:0070402">
    <property type="term" value="F:NADPH binding"/>
    <property type="evidence" value="ECO:0007669"/>
    <property type="project" value="InterPro"/>
</dbReference>
<dbReference type="GO" id="GO:0051484">
    <property type="term" value="P:isopentenyl diphosphate biosynthetic process, methylerythritol 4-phosphate pathway involved in terpenoid biosynthetic process"/>
    <property type="evidence" value="ECO:0007669"/>
    <property type="project" value="TreeGrafter"/>
</dbReference>
<dbReference type="FunFam" id="3.40.50.720:FF:000045">
    <property type="entry name" value="1-deoxy-D-xylulose 5-phosphate reductoisomerase"/>
    <property type="match status" value="1"/>
</dbReference>
<dbReference type="Gene3D" id="1.10.1740.10">
    <property type="match status" value="1"/>
</dbReference>
<dbReference type="Gene3D" id="3.40.50.720">
    <property type="entry name" value="NAD(P)-binding Rossmann-like Domain"/>
    <property type="match status" value="1"/>
</dbReference>
<dbReference type="HAMAP" id="MF_00183">
    <property type="entry name" value="DXP_reductoisom"/>
    <property type="match status" value="1"/>
</dbReference>
<dbReference type="InterPro" id="IPR003821">
    <property type="entry name" value="DXP_reductoisomerase"/>
</dbReference>
<dbReference type="InterPro" id="IPR013644">
    <property type="entry name" value="DXP_reductoisomerase_C"/>
</dbReference>
<dbReference type="InterPro" id="IPR013512">
    <property type="entry name" value="DXP_reductoisomerase_N"/>
</dbReference>
<dbReference type="InterPro" id="IPR026877">
    <property type="entry name" value="DXPR_C"/>
</dbReference>
<dbReference type="InterPro" id="IPR036169">
    <property type="entry name" value="DXPR_C_sf"/>
</dbReference>
<dbReference type="InterPro" id="IPR036291">
    <property type="entry name" value="NAD(P)-bd_dom_sf"/>
</dbReference>
<dbReference type="NCBIfam" id="TIGR00243">
    <property type="entry name" value="Dxr"/>
    <property type="match status" value="1"/>
</dbReference>
<dbReference type="NCBIfam" id="NF003938">
    <property type="entry name" value="PRK05447.1-1"/>
    <property type="match status" value="1"/>
</dbReference>
<dbReference type="NCBIfam" id="NF009114">
    <property type="entry name" value="PRK12464.1"/>
    <property type="match status" value="1"/>
</dbReference>
<dbReference type="PANTHER" id="PTHR30525">
    <property type="entry name" value="1-DEOXY-D-XYLULOSE 5-PHOSPHATE REDUCTOISOMERASE"/>
    <property type="match status" value="1"/>
</dbReference>
<dbReference type="PANTHER" id="PTHR30525:SF0">
    <property type="entry name" value="1-DEOXY-D-XYLULOSE 5-PHOSPHATE REDUCTOISOMERASE, CHLOROPLASTIC"/>
    <property type="match status" value="1"/>
</dbReference>
<dbReference type="Pfam" id="PF08436">
    <property type="entry name" value="DXP_redisom_C"/>
    <property type="match status" value="1"/>
</dbReference>
<dbReference type="Pfam" id="PF02670">
    <property type="entry name" value="DXP_reductoisom"/>
    <property type="match status" value="1"/>
</dbReference>
<dbReference type="Pfam" id="PF13288">
    <property type="entry name" value="DXPR_C"/>
    <property type="match status" value="1"/>
</dbReference>
<dbReference type="PIRSF" id="PIRSF006205">
    <property type="entry name" value="Dxp_reductismrs"/>
    <property type="match status" value="1"/>
</dbReference>
<dbReference type="SUPFAM" id="SSF69055">
    <property type="entry name" value="1-deoxy-D-xylulose-5-phosphate reductoisomerase, C-terminal domain"/>
    <property type="match status" value="1"/>
</dbReference>
<dbReference type="SUPFAM" id="SSF55347">
    <property type="entry name" value="Glyceraldehyde-3-phosphate dehydrogenase-like, C-terminal domain"/>
    <property type="match status" value="1"/>
</dbReference>
<dbReference type="SUPFAM" id="SSF51735">
    <property type="entry name" value="NAD(P)-binding Rossmann-fold domains"/>
    <property type="match status" value="1"/>
</dbReference>
<sequence>MSDPTPPRLQRVTVLGATGSIGMSTLDVLARHPDRFEAFALTAQIQVERLFELCLRFSPRFAVLVDSAAASDLRQRLKAAGSATEVLAGPGALVDVAAHPDSDAVMAAIVGAAGLAPALAAARAGKRVLLANKEALVLSGRLFMQAVVESGAELLPIDSEHNAVFQALPQGYARDPQRCGVRRVLLTASGGPFRERSIESLADVTPDEACAHPNWVMGRKISVDSATMMNKGLEVIEAHWLFAVPPEAIEVVVHPQSVIHSMVEYADGSVLAQLGNPDMRTPIAHALAYPERIDAGVRPLDLFEIGRLNFERPDFVRFPCLALAYDALREGGAAAAVLNAANEEAVAAFLERRVGFTRIPDIIAATLERARDLSVDCIEAILDADARAREVARSEILARQTTP</sequence>
<feature type="chain" id="PRO_0000163599" description="1-deoxy-D-xylulose 5-phosphate reductoisomerase">
    <location>
        <begin position="1"/>
        <end position="403"/>
    </location>
</feature>
<feature type="binding site" evidence="1">
    <location>
        <position position="18"/>
    </location>
    <ligand>
        <name>NADPH</name>
        <dbReference type="ChEBI" id="CHEBI:57783"/>
    </ligand>
</feature>
<feature type="binding site" evidence="1">
    <location>
        <position position="19"/>
    </location>
    <ligand>
        <name>NADPH</name>
        <dbReference type="ChEBI" id="CHEBI:57783"/>
    </ligand>
</feature>
<feature type="binding site" evidence="1">
    <location>
        <position position="20"/>
    </location>
    <ligand>
        <name>NADPH</name>
        <dbReference type="ChEBI" id="CHEBI:57783"/>
    </ligand>
</feature>
<feature type="binding site" evidence="1">
    <location>
        <position position="21"/>
    </location>
    <ligand>
        <name>NADPH</name>
        <dbReference type="ChEBI" id="CHEBI:57783"/>
    </ligand>
</feature>
<feature type="binding site" evidence="1">
    <location>
        <position position="46"/>
    </location>
    <ligand>
        <name>NADPH</name>
        <dbReference type="ChEBI" id="CHEBI:57783"/>
    </ligand>
</feature>
<feature type="binding site" evidence="1">
    <location>
        <position position="132"/>
    </location>
    <ligand>
        <name>NADPH</name>
        <dbReference type="ChEBI" id="CHEBI:57783"/>
    </ligand>
</feature>
<feature type="binding site" evidence="1">
    <location>
        <position position="133"/>
    </location>
    <ligand>
        <name>1-deoxy-D-xylulose 5-phosphate</name>
        <dbReference type="ChEBI" id="CHEBI:57792"/>
    </ligand>
</feature>
<feature type="binding site" evidence="1">
    <location>
        <position position="134"/>
    </location>
    <ligand>
        <name>NADPH</name>
        <dbReference type="ChEBI" id="CHEBI:57783"/>
    </ligand>
</feature>
<feature type="binding site" evidence="1">
    <location>
        <position position="158"/>
    </location>
    <ligand>
        <name>Mn(2+)</name>
        <dbReference type="ChEBI" id="CHEBI:29035"/>
    </ligand>
</feature>
<feature type="binding site" evidence="1">
    <location>
        <position position="159"/>
    </location>
    <ligand>
        <name>1-deoxy-D-xylulose 5-phosphate</name>
        <dbReference type="ChEBI" id="CHEBI:57792"/>
    </ligand>
</feature>
<feature type="binding site" evidence="1">
    <location>
        <position position="160"/>
    </location>
    <ligand>
        <name>1-deoxy-D-xylulose 5-phosphate</name>
        <dbReference type="ChEBI" id="CHEBI:57792"/>
    </ligand>
</feature>
<feature type="binding site" evidence="1">
    <location>
        <position position="160"/>
    </location>
    <ligand>
        <name>Mn(2+)</name>
        <dbReference type="ChEBI" id="CHEBI:29035"/>
    </ligand>
</feature>
<feature type="binding site" evidence="1">
    <location>
        <position position="189"/>
    </location>
    <ligand>
        <name>1-deoxy-D-xylulose 5-phosphate</name>
        <dbReference type="ChEBI" id="CHEBI:57792"/>
    </ligand>
</feature>
<feature type="binding site" evidence="1">
    <location>
        <position position="212"/>
    </location>
    <ligand>
        <name>1-deoxy-D-xylulose 5-phosphate</name>
        <dbReference type="ChEBI" id="CHEBI:57792"/>
    </ligand>
</feature>
<feature type="binding site" evidence="1">
    <location>
        <position position="218"/>
    </location>
    <ligand>
        <name>NADPH</name>
        <dbReference type="ChEBI" id="CHEBI:57783"/>
    </ligand>
</feature>
<feature type="binding site" evidence="1">
    <location>
        <position position="225"/>
    </location>
    <ligand>
        <name>1-deoxy-D-xylulose 5-phosphate</name>
        <dbReference type="ChEBI" id="CHEBI:57792"/>
    </ligand>
</feature>
<feature type="binding site" evidence="1">
    <location>
        <position position="230"/>
    </location>
    <ligand>
        <name>1-deoxy-D-xylulose 5-phosphate</name>
        <dbReference type="ChEBI" id="CHEBI:57792"/>
    </ligand>
</feature>
<feature type="binding site" evidence="1">
    <location>
        <position position="231"/>
    </location>
    <ligand>
        <name>1-deoxy-D-xylulose 5-phosphate</name>
        <dbReference type="ChEBI" id="CHEBI:57792"/>
    </ligand>
</feature>
<feature type="binding site" evidence="1">
    <location>
        <position position="234"/>
    </location>
    <ligand>
        <name>1-deoxy-D-xylulose 5-phosphate</name>
        <dbReference type="ChEBI" id="CHEBI:57792"/>
    </ligand>
</feature>
<feature type="binding site" evidence="1">
    <location>
        <position position="234"/>
    </location>
    <ligand>
        <name>Mn(2+)</name>
        <dbReference type="ChEBI" id="CHEBI:29035"/>
    </ligand>
</feature>
<keyword id="KW-0414">Isoprene biosynthesis</keyword>
<keyword id="KW-0464">Manganese</keyword>
<keyword id="KW-0479">Metal-binding</keyword>
<keyword id="KW-0521">NADP</keyword>
<keyword id="KW-0560">Oxidoreductase</keyword>
<keyword id="KW-1185">Reference proteome</keyword>
<comment type="function">
    <text evidence="1">Catalyzes the NADPH-dependent rearrangement and reduction of 1-deoxy-D-xylulose-5-phosphate (DXP) to 2-C-methyl-D-erythritol 4-phosphate (MEP).</text>
</comment>
<comment type="catalytic activity">
    <reaction evidence="1">
        <text>2-C-methyl-D-erythritol 4-phosphate + NADP(+) = 1-deoxy-D-xylulose 5-phosphate + NADPH + H(+)</text>
        <dbReference type="Rhea" id="RHEA:13717"/>
        <dbReference type="ChEBI" id="CHEBI:15378"/>
        <dbReference type="ChEBI" id="CHEBI:57783"/>
        <dbReference type="ChEBI" id="CHEBI:57792"/>
        <dbReference type="ChEBI" id="CHEBI:58262"/>
        <dbReference type="ChEBI" id="CHEBI:58349"/>
        <dbReference type="EC" id="1.1.1.267"/>
    </reaction>
    <physiologicalReaction direction="right-to-left" evidence="1">
        <dbReference type="Rhea" id="RHEA:13719"/>
    </physiologicalReaction>
</comment>
<comment type="cofactor">
    <cofactor evidence="1">
        <name>Mg(2+)</name>
        <dbReference type="ChEBI" id="CHEBI:18420"/>
    </cofactor>
    <cofactor evidence="1">
        <name>Mn(2+)</name>
        <dbReference type="ChEBI" id="CHEBI:29035"/>
    </cofactor>
</comment>
<comment type="pathway">
    <text evidence="1">Isoprenoid biosynthesis; isopentenyl diphosphate biosynthesis via DXP pathway; isopentenyl diphosphate from 1-deoxy-D-xylulose 5-phosphate: step 1/6.</text>
</comment>
<comment type="similarity">
    <text evidence="1">Belongs to the DXR family.</text>
</comment>
<reference key="1">
    <citation type="journal article" date="2005" name="Arch. Microbiol.">
        <title>The genome sequence of an anaerobic aromatic-degrading denitrifying bacterium, strain EbN1.</title>
        <authorList>
            <person name="Rabus R."/>
            <person name="Kube M."/>
            <person name="Heider J."/>
            <person name="Beck A."/>
            <person name="Heitmann K."/>
            <person name="Widdel F."/>
            <person name="Reinhardt R."/>
        </authorList>
    </citation>
    <scope>NUCLEOTIDE SEQUENCE [LARGE SCALE GENOMIC DNA]</scope>
    <source>
        <strain>DSM 19018 / LMG 30748 / EbN1</strain>
    </source>
</reference>
<evidence type="ECO:0000255" key="1">
    <source>
        <dbReference type="HAMAP-Rule" id="MF_00183"/>
    </source>
</evidence>
<proteinExistence type="inferred from homology"/>
<accession>Q5NZG9</accession>